<protein>
    <recommendedName>
        <fullName>Peptidyl-prolyl cis-trans isomerase H</fullName>
        <shortName>PPIase H</shortName>
        <ecNumber>5.2.1.8</ecNumber>
    </recommendedName>
    <alternativeName>
        <fullName>Rotamase H</fullName>
    </alternativeName>
</protein>
<evidence type="ECO:0000250" key="1"/>
<evidence type="ECO:0000255" key="2">
    <source>
        <dbReference type="PROSITE-ProRule" id="PRU00156"/>
    </source>
</evidence>
<evidence type="ECO:0000305" key="3"/>
<dbReference type="EC" id="5.2.1.8"/>
<dbReference type="EMBL" id="BA000056">
    <property type="protein sequence ID" value="BAE65490.1"/>
    <property type="molecule type" value="Genomic_DNA"/>
</dbReference>
<dbReference type="RefSeq" id="XP_001826623.1">
    <property type="nucleotide sequence ID" value="XM_001826571.2"/>
</dbReference>
<dbReference type="SMR" id="Q2TZ33"/>
<dbReference type="STRING" id="510516.Q2TZ33"/>
<dbReference type="EnsemblFungi" id="BAE65490">
    <property type="protein sequence ID" value="BAE65490"/>
    <property type="gene ID" value="AO090103000002"/>
</dbReference>
<dbReference type="GeneID" id="5998745"/>
<dbReference type="KEGG" id="aor:AO090103000002"/>
<dbReference type="VEuPathDB" id="FungiDB:AO090103000002"/>
<dbReference type="HOGENOM" id="CLU_012062_4_3_1"/>
<dbReference type="OMA" id="SVWGQVI"/>
<dbReference type="OrthoDB" id="2008at5052"/>
<dbReference type="Proteomes" id="UP000006564">
    <property type="component" value="Chromosome 8"/>
</dbReference>
<dbReference type="GO" id="GO:0005737">
    <property type="term" value="C:cytoplasm"/>
    <property type="evidence" value="ECO:0007669"/>
    <property type="project" value="TreeGrafter"/>
</dbReference>
<dbReference type="GO" id="GO:0005634">
    <property type="term" value="C:nucleus"/>
    <property type="evidence" value="ECO:0007669"/>
    <property type="project" value="UniProtKB-SubCell"/>
</dbReference>
<dbReference type="GO" id="GO:0016018">
    <property type="term" value="F:cyclosporin A binding"/>
    <property type="evidence" value="ECO:0007669"/>
    <property type="project" value="TreeGrafter"/>
</dbReference>
<dbReference type="GO" id="GO:0003755">
    <property type="term" value="F:peptidyl-prolyl cis-trans isomerase activity"/>
    <property type="evidence" value="ECO:0007669"/>
    <property type="project" value="UniProtKB-KW"/>
</dbReference>
<dbReference type="GO" id="GO:0006457">
    <property type="term" value="P:protein folding"/>
    <property type="evidence" value="ECO:0007669"/>
    <property type="project" value="InterPro"/>
</dbReference>
<dbReference type="CDD" id="cd01926">
    <property type="entry name" value="cyclophilin_ABH_like"/>
    <property type="match status" value="1"/>
</dbReference>
<dbReference type="FunFam" id="2.40.100.10:FF:000035">
    <property type="entry name" value="Peptidyl-prolyl cis-trans isomerase"/>
    <property type="match status" value="1"/>
</dbReference>
<dbReference type="Gene3D" id="2.40.100.10">
    <property type="entry name" value="Cyclophilin-like"/>
    <property type="match status" value="1"/>
</dbReference>
<dbReference type="InterPro" id="IPR029000">
    <property type="entry name" value="Cyclophilin-like_dom_sf"/>
</dbReference>
<dbReference type="InterPro" id="IPR024936">
    <property type="entry name" value="Cyclophilin-type_PPIase"/>
</dbReference>
<dbReference type="InterPro" id="IPR020892">
    <property type="entry name" value="Cyclophilin-type_PPIase_CS"/>
</dbReference>
<dbReference type="InterPro" id="IPR002130">
    <property type="entry name" value="Cyclophilin-type_PPIase_dom"/>
</dbReference>
<dbReference type="PANTHER" id="PTHR11071">
    <property type="entry name" value="PEPTIDYL-PROLYL CIS-TRANS ISOMERASE"/>
    <property type="match status" value="1"/>
</dbReference>
<dbReference type="PANTHER" id="PTHR11071:SF561">
    <property type="entry name" value="PEPTIDYL-PROLYL CIS-TRANS ISOMERASE D-RELATED"/>
    <property type="match status" value="1"/>
</dbReference>
<dbReference type="Pfam" id="PF00160">
    <property type="entry name" value="Pro_isomerase"/>
    <property type="match status" value="1"/>
</dbReference>
<dbReference type="PIRSF" id="PIRSF001467">
    <property type="entry name" value="Peptidylpro_ismrse"/>
    <property type="match status" value="1"/>
</dbReference>
<dbReference type="PRINTS" id="PR00153">
    <property type="entry name" value="CSAPPISMRASE"/>
</dbReference>
<dbReference type="SUPFAM" id="SSF50891">
    <property type="entry name" value="Cyclophilin-like"/>
    <property type="match status" value="1"/>
</dbReference>
<dbReference type="PROSITE" id="PS00170">
    <property type="entry name" value="CSA_PPIASE_1"/>
    <property type="match status" value="1"/>
</dbReference>
<dbReference type="PROSITE" id="PS50072">
    <property type="entry name" value="CSA_PPIASE_2"/>
    <property type="match status" value="1"/>
</dbReference>
<proteinExistence type="inferred from homology"/>
<gene>
    <name type="primary">cyp3</name>
    <name type="ORF">AO090103000002</name>
</gene>
<organism>
    <name type="scientific">Aspergillus oryzae (strain ATCC 42149 / RIB 40)</name>
    <name type="common">Yellow koji mold</name>
    <dbReference type="NCBI Taxonomy" id="510516"/>
    <lineage>
        <taxon>Eukaryota</taxon>
        <taxon>Fungi</taxon>
        <taxon>Dikarya</taxon>
        <taxon>Ascomycota</taxon>
        <taxon>Pezizomycotina</taxon>
        <taxon>Eurotiomycetes</taxon>
        <taxon>Eurotiomycetidae</taxon>
        <taxon>Eurotiales</taxon>
        <taxon>Aspergillaceae</taxon>
        <taxon>Aspergillus</taxon>
        <taxon>Aspergillus subgen. Circumdati</taxon>
    </lineage>
</organism>
<keyword id="KW-0413">Isomerase</keyword>
<keyword id="KW-0539">Nucleus</keyword>
<keyword id="KW-1185">Reference proteome</keyword>
<keyword id="KW-0697">Rotamase</keyword>
<feature type="chain" id="PRO_0000232954" description="Peptidyl-prolyl cis-trans isomerase H">
    <location>
        <begin position="1"/>
        <end position="181"/>
    </location>
</feature>
<feature type="domain" description="PPIase cyclophilin-type" evidence="2">
    <location>
        <begin position="17"/>
        <end position="180"/>
    </location>
</feature>
<sequence length="181" mass="20110">MDSQVTSSAKTPNPVVFFDITLGGESLGRIKMELFTSITPRTAENFRQFCTGESKSPQGRPQGYKNSKFHRVIKDFMIQGGDFVNGDGTGSRTIYGTPRFQDENFILKHDQPGLLSMANSGPNTNGCQFFITTTATPFLNNKHVVFGQVVEGMDVVRMIENTRTTRDKPNQDVTIIQCGEM</sequence>
<comment type="function">
    <text evidence="1">PPIases accelerate the folding of proteins. It catalyzes the cis-trans isomerization of proline imidic peptide bonds in oligopeptides (By similarity).</text>
</comment>
<comment type="catalytic activity">
    <reaction>
        <text>[protein]-peptidylproline (omega=180) = [protein]-peptidylproline (omega=0)</text>
        <dbReference type="Rhea" id="RHEA:16237"/>
        <dbReference type="Rhea" id="RHEA-COMP:10747"/>
        <dbReference type="Rhea" id="RHEA-COMP:10748"/>
        <dbReference type="ChEBI" id="CHEBI:83833"/>
        <dbReference type="ChEBI" id="CHEBI:83834"/>
        <dbReference type="EC" id="5.2.1.8"/>
    </reaction>
</comment>
<comment type="subcellular location">
    <subcellularLocation>
        <location evidence="1">Nucleus</location>
    </subcellularLocation>
</comment>
<comment type="similarity">
    <text evidence="3">Belongs to the cyclophilin-type PPIase family. PPIase H subfamily.</text>
</comment>
<accession>Q2TZ33</accession>
<name>PPIH_ASPOR</name>
<reference key="1">
    <citation type="journal article" date="2005" name="Nature">
        <title>Genome sequencing and analysis of Aspergillus oryzae.</title>
        <authorList>
            <person name="Machida M."/>
            <person name="Asai K."/>
            <person name="Sano M."/>
            <person name="Tanaka T."/>
            <person name="Kumagai T."/>
            <person name="Terai G."/>
            <person name="Kusumoto K."/>
            <person name="Arima T."/>
            <person name="Akita O."/>
            <person name="Kashiwagi Y."/>
            <person name="Abe K."/>
            <person name="Gomi K."/>
            <person name="Horiuchi H."/>
            <person name="Kitamoto K."/>
            <person name="Kobayashi T."/>
            <person name="Takeuchi M."/>
            <person name="Denning D.W."/>
            <person name="Galagan J.E."/>
            <person name="Nierman W.C."/>
            <person name="Yu J."/>
            <person name="Archer D.B."/>
            <person name="Bennett J.W."/>
            <person name="Bhatnagar D."/>
            <person name="Cleveland T.E."/>
            <person name="Fedorova N.D."/>
            <person name="Gotoh O."/>
            <person name="Horikawa H."/>
            <person name="Hosoyama A."/>
            <person name="Ichinomiya M."/>
            <person name="Igarashi R."/>
            <person name="Iwashita K."/>
            <person name="Juvvadi P.R."/>
            <person name="Kato M."/>
            <person name="Kato Y."/>
            <person name="Kin T."/>
            <person name="Kokubun A."/>
            <person name="Maeda H."/>
            <person name="Maeyama N."/>
            <person name="Maruyama J."/>
            <person name="Nagasaki H."/>
            <person name="Nakajima T."/>
            <person name="Oda K."/>
            <person name="Okada K."/>
            <person name="Paulsen I."/>
            <person name="Sakamoto K."/>
            <person name="Sawano T."/>
            <person name="Takahashi M."/>
            <person name="Takase K."/>
            <person name="Terabayashi Y."/>
            <person name="Wortman J.R."/>
            <person name="Yamada O."/>
            <person name="Yamagata Y."/>
            <person name="Anazawa H."/>
            <person name="Hata Y."/>
            <person name="Koide Y."/>
            <person name="Komori T."/>
            <person name="Koyama Y."/>
            <person name="Minetoki T."/>
            <person name="Suharnan S."/>
            <person name="Tanaka A."/>
            <person name="Isono K."/>
            <person name="Kuhara S."/>
            <person name="Ogasawara N."/>
            <person name="Kikuchi H."/>
        </authorList>
    </citation>
    <scope>NUCLEOTIDE SEQUENCE [LARGE SCALE GENOMIC DNA]</scope>
    <source>
        <strain>ATCC 42149 / RIB 40</strain>
    </source>
</reference>